<feature type="chain" id="PRO_0000325503" description="Probable malate:quinone oxidoreductase">
    <location>
        <begin position="1"/>
        <end position="516"/>
    </location>
</feature>
<comment type="catalytic activity">
    <reaction evidence="1">
        <text>(S)-malate + a quinone = a quinol + oxaloacetate</text>
        <dbReference type="Rhea" id="RHEA:46012"/>
        <dbReference type="ChEBI" id="CHEBI:15589"/>
        <dbReference type="ChEBI" id="CHEBI:16452"/>
        <dbReference type="ChEBI" id="CHEBI:24646"/>
        <dbReference type="ChEBI" id="CHEBI:132124"/>
        <dbReference type="EC" id="1.1.5.4"/>
    </reaction>
</comment>
<comment type="cofactor">
    <cofactor evidence="1">
        <name>FAD</name>
        <dbReference type="ChEBI" id="CHEBI:57692"/>
    </cofactor>
</comment>
<comment type="pathway">
    <text evidence="1">Carbohydrate metabolism; tricarboxylic acid cycle; oxaloacetate from (S)-malate (quinone route): step 1/1.</text>
</comment>
<comment type="similarity">
    <text evidence="1">Belongs to the MQO family.</text>
</comment>
<name>MQO_MYCSK</name>
<accession>A1UEQ5</accession>
<dbReference type="EC" id="1.1.5.4" evidence="1"/>
<dbReference type="EMBL" id="CP000518">
    <property type="protein sequence ID" value="ABL91313.1"/>
    <property type="molecule type" value="Genomic_DNA"/>
</dbReference>
<dbReference type="SMR" id="A1UEQ5"/>
<dbReference type="STRING" id="189918.Mkms_2115"/>
<dbReference type="KEGG" id="mkm:Mkms_2115"/>
<dbReference type="HOGENOM" id="CLU_028151_0_0_11"/>
<dbReference type="OrthoDB" id="9763983at2"/>
<dbReference type="UniPathway" id="UPA00223">
    <property type="reaction ID" value="UER01008"/>
</dbReference>
<dbReference type="GO" id="GO:0047545">
    <property type="term" value="F:2-hydroxyglutarate dehydrogenase activity"/>
    <property type="evidence" value="ECO:0007669"/>
    <property type="project" value="TreeGrafter"/>
</dbReference>
<dbReference type="GO" id="GO:0008924">
    <property type="term" value="F:L-malate dehydrogenase (quinone) activity"/>
    <property type="evidence" value="ECO:0007669"/>
    <property type="project" value="UniProtKB-UniRule"/>
</dbReference>
<dbReference type="GO" id="GO:0006099">
    <property type="term" value="P:tricarboxylic acid cycle"/>
    <property type="evidence" value="ECO:0007669"/>
    <property type="project" value="UniProtKB-UniRule"/>
</dbReference>
<dbReference type="Gene3D" id="3.50.50.60">
    <property type="entry name" value="FAD/NAD(P)-binding domain"/>
    <property type="match status" value="1"/>
</dbReference>
<dbReference type="HAMAP" id="MF_00212">
    <property type="entry name" value="MQO"/>
    <property type="match status" value="1"/>
</dbReference>
<dbReference type="InterPro" id="IPR036188">
    <property type="entry name" value="FAD/NAD-bd_sf"/>
</dbReference>
<dbReference type="InterPro" id="IPR006231">
    <property type="entry name" value="MQO"/>
</dbReference>
<dbReference type="NCBIfam" id="TIGR01320">
    <property type="entry name" value="mal_quin_oxido"/>
    <property type="match status" value="1"/>
</dbReference>
<dbReference type="NCBIfam" id="NF003605">
    <property type="entry name" value="PRK05257.1-4"/>
    <property type="match status" value="1"/>
</dbReference>
<dbReference type="NCBIfam" id="NF003606">
    <property type="entry name" value="PRK05257.2-1"/>
    <property type="match status" value="1"/>
</dbReference>
<dbReference type="NCBIfam" id="NF003611">
    <property type="entry name" value="PRK05257.3-2"/>
    <property type="match status" value="1"/>
</dbReference>
<dbReference type="NCBIfam" id="NF009875">
    <property type="entry name" value="PRK13339.1"/>
    <property type="match status" value="1"/>
</dbReference>
<dbReference type="PANTHER" id="PTHR43104">
    <property type="entry name" value="L-2-HYDROXYGLUTARATE DEHYDROGENASE, MITOCHONDRIAL"/>
    <property type="match status" value="1"/>
</dbReference>
<dbReference type="PANTHER" id="PTHR43104:SF2">
    <property type="entry name" value="L-2-HYDROXYGLUTARATE DEHYDROGENASE, MITOCHONDRIAL"/>
    <property type="match status" value="1"/>
</dbReference>
<dbReference type="Pfam" id="PF06039">
    <property type="entry name" value="Mqo"/>
    <property type="match status" value="1"/>
</dbReference>
<dbReference type="SUPFAM" id="SSF51905">
    <property type="entry name" value="FAD/NAD(P)-binding domain"/>
    <property type="match status" value="1"/>
</dbReference>
<protein>
    <recommendedName>
        <fullName evidence="1">Probable malate:quinone oxidoreductase</fullName>
        <ecNumber evidence="1">1.1.5.4</ecNumber>
    </recommendedName>
    <alternativeName>
        <fullName evidence="1">MQO</fullName>
    </alternativeName>
    <alternativeName>
        <fullName evidence="1">Malate dehydrogenase [quinone]</fullName>
    </alternativeName>
</protein>
<keyword id="KW-0274">FAD</keyword>
<keyword id="KW-0285">Flavoprotein</keyword>
<keyword id="KW-0560">Oxidoreductase</keyword>
<keyword id="KW-0816">Tricarboxylic acid cycle</keyword>
<gene>
    <name evidence="1" type="primary">mqo</name>
    <name type="ordered locus">Mkms_2115</name>
</gene>
<proteinExistence type="inferred from homology"/>
<sequence>MSDAQVAKTDVVLVGAGIMSATLSALIKLLEPNWSITLIERLDGAAAESSDPWNNAGTGHSALCELNYTPEGPGGSIDITKAVHVNEQFQVSRQFWTYAVENGVLPDVRNFINPIPHVSFVSGARNVEYLRARYDALVPNPLFATMEYIDDRDEFARRLPFMADKRDFREPVALNWSQDGTDIDFGSLSRQLIGYTAQRGMTTLFGHEVRDLDKQSDGSWSVKVVNRRTGAKRKLNAKFVFVGAGGGALPLLQKAGIEEAKGFGGFPVGGQWLRTGNPELTARHQAKVYGMPPLGAPPMSVPHLDTRVINGKSWLLFGPFAGWSPKFLKQGKVTDLPFSVKPNNLASMLGVGLTEMGLLKYLIGQLLLSEADRVETLRNFAPSARDSDWELDIAGQRVQVIRRKGKGGVLEFGTTVLAAKDGSIAGLLGASPGASTAVPAMLDVMERCFGDRYTAWLPKLKEIVPSLGTKLSDEPKLFQEIWAHGTKVLKLDHPAAGLPVAGTDTEHREPATTVTA</sequence>
<organism>
    <name type="scientific">Mycobacterium sp. (strain KMS)</name>
    <dbReference type="NCBI Taxonomy" id="189918"/>
    <lineage>
        <taxon>Bacteria</taxon>
        <taxon>Bacillati</taxon>
        <taxon>Actinomycetota</taxon>
        <taxon>Actinomycetes</taxon>
        <taxon>Mycobacteriales</taxon>
        <taxon>Mycobacteriaceae</taxon>
        <taxon>Mycobacterium</taxon>
    </lineage>
</organism>
<reference key="1">
    <citation type="submission" date="2006-12" db="EMBL/GenBank/DDBJ databases">
        <title>Complete sequence of chromosome of Mycobacterium sp. KMS.</title>
        <authorList>
            <consortium name="US DOE Joint Genome Institute"/>
            <person name="Copeland A."/>
            <person name="Lucas S."/>
            <person name="Lapidus A."/>
            <person name="Barry K."/>
            <person name="Detter J.C."/>
            <person name="Glavina del Rio T."/>
            <person name="Hammon N."/>
            <person name="Israni S."/>
            <person name="Dalin E."/>
            <person name="Tice H."/>
            <person name="Pitluck S."/>
            <person name="Kiss H."/>
            <person name="Brettin T."/>
            <person name="Bruce D."/>
            <person name="Han C."/>
            <person name="Tapia R."/>
            <person name="Gilna P."/>
            <person name="Schmutz J."/>
            <person name="Larimer F."/>
            <person name="Land M."/>
            <person name="Hauser L."/>
            <person name="Kyrpides N."/>
            <person name="Mikhailova N."/>
            <person name="Miller C.D."/>
            <person name="Richardson P."/>
        </authorList>
    </citation>
    <scope>NUCLEOTIDE SEQUENCE [LARGE SCALE GENOMIC DNA]</scope>
    <source>
        <strain>KMS</strain>
    </source>
</reference>
<evidence type="ECO:0000255" key="1">
    <source>
        <dbReference type="HAMAP-Rule" id="MF_00212"/>
    </source>
</evidence>